<protein>
    <recommendedName>
        <fullName>Cytochrome b</fullName>
    </recommendedName>
    <alternativeName>
        <fullName>Complex III subunit 3</fullName>
    </alternativeName>
    <alternativeName>
        <fullName>Complex III subunit III</fullName>
    </alternativeName>
    <alternativeName>
        <fullName>Cytochrome b-c1 complex subunit 3</fullName>
    </alternativeName>
    <alternativeName>
        <fullName>Ubiquinol-cytochrome-c reductase complex cytochrome b subunit</fullName>
    </alternativeName>
</protein>
<accession>P48665</accession>
<keyword id="KW-0249">Electron transport</keyword>
<keyword id="KW-0349">Heme</keyword>
<keyword id="KW-0408">Iron</keyword>
<keyword id="KW-0472">Membrane</keyword>
<keyword id="KW-0479">Metal-binding</keyword>
<keyword id="KW-0496">Mitochondrion</keyword>
<keyword id="KW-0999">Mitochondrion inner membrane</keyword>
<keyword id="KW-1185">Reference proteome</keyword>
<keyword id="KW-0679">Respiratory chain</keyword>
<keyword id="KW-0812">Transmembrane</keyword>
<keyword id="KW-1133">Transmembrane helix</keyword>
<keyword id="KW-0813">Transport</keyword>
<keyword id="KW-0830">Ubiquinone</keyword>
<proteinExistence type="inferred from homology"/>
<name>CYB_HORSE</name>
<reference key="1">
    <citation type="journal article" date="1994" name="Gene">
        <title>The complete mitochondrial DNA sequence of the horse, Equus caballus: extensive heteroplasmy of the control region.</title>
        <authorList>
            <person name="Xu X."/>
            <person name="Arnason U."/>
        </authorList>
    </citation>
    <scope>NUCLEOTIDE SEQUENCE [LARGE SCALE GENOMIC DNA]</scope>
    <source>
        <strain evidence="5">Thoroughbred</strain>
    </source>
</reference>
<reference key="2">
    <citation type="submission" date="1994-07" db="EMBL/GenBank/DDBJ databases">
        <authorList>
            <person name="Chikuni K."/>
            <person name="Mori Y."/>
            <person name="Tabata T."/>
            <person name="Saito M."/>
            <person name="Monma M."/>
            <person name="Kosugiyama M."/>
        </authorList>
    </citation>
    <scope>NUCLEOTIDE SEQUENCE [GENOMIC DNA]</scope>
    <source>
        <tissue>Muscle</tissue>
    </source>
</reference>
<reference key="3">
    <citation type="submission" date="1996-02" db="EMBL/GenBank/DDBJ databases">
        <authorList>
            <person name="Ishida N."/>
        </authorList>
    </citation>
    <scope>NUCLEOTIDE SEQUENCE [GENOMIC DNA]</scope>
    <source>
        <strain>Thoroughbred</strain>
        <tissue>Blood</tissue>
    </source>
</reference>
<organism>
    <name type="scientific">Equus caballus</name>
    <name type="common">Horse</name>
    <dbReference type="NCBI Taxonomy" id="9796"/>
    <lineage>
        <taxon>Eukaryota</taxon>
        <taxon>Metazoa</taxon>
        <taxon>Chordata</taxon>
        <taxon>Craniata</taxon>
        <taxon>Vertebrata</taxon>
        <taxon>Euteleostomi</taxon>
        <taxon>Mammalia</taxon>
        <taxon>Eutheria</taxon>
        <taxon>Laurasiatheria</taxon>
        <taxon>Perissodactyla</taxon>
        <taxon>Equidae</taxon>
        <taxon>Equus</taxon>
    </lineage>
</organism>
<gene>
    <name type="primary">MT-CYB</name>
    <name type="synonym">COB</name>
    <name type="synonym">CYTB</name>
    <name type="synonym">MTCYB</name>
</gene>
<dbReference type="EMBL" id="X79547">
    <property type="protein sequence ID" value="CAA56091.1"/>
    <property type="molecule type" value="Genomic_DNA"/>
</dbReference>
<dbReference type="EMBL" id="D32190">
    <property type="protein sequence ID" value="BAA06889.1"/>
    <property type="molecule type" value="Genomic_DNA"/>
</dbReference>
<dbReference type="EMBL" id="D82932">
    <property type="protein sequence ID" value="BAA11637.1"/>
    <property type="molecule type" value="Genomic_DNA"/>
</dbReference>
<dbReference type="PIR" id="T11869">
    <property type="entry name" value="T11869"/>
</dbReference>
<dbReference type="RefSeq" id="NP_007172.1">
    <property type="nucleotide sequence ID" value="NC_001640.1"/>
</dbReference>
<dbReference type="SMR" id="P48665"/>
<dbReference type="FunCoup" id="P48665">
    <property type="interactions" value="182"/>
</dbReference>
<dbReference type="STRING" id="9796.ENSECAP00000023113"/>
<dbReference type="PaxDb" id="9796-ENSECAP00000023113"/>
<dbReference type="Ensembl" id="ENSECAT00000029845.1">
    <property type="protein sequence ID" value="ENSECAP00000023113.1"/>
    <property type="gene ID" value="ENSECAG00000027669.1"/>
</dbReference>
<dbReference type="KEGG" id="ecb:807847"/>
<dbReference type="VGNC" id="VGNC:99801">
    <property type="gene designation" value="MT-CYB"/>
</dbReference>
<dbReference type="GeneTree" id="ENSGT00390000017948"/>
<dbReference type="HOGENOM" id="CLU_031114_3_0_1"/>
<dbReference type="InParanoid" id="P48665"/>
<dbReference type="OMA" id="NISAWWN"/>
<dbReference type="OrthoDB" id="244at2759"/>
<dbReference type="Proteomes" id="UP000002281">
    <property type="component" value="Mitochondrion"/>
</dbReference>
<dbReference type="Bgee" id="ENSECAG00000027669">
    <property type="expression patterns" value="Expressed in retina and 23 other cell types or tissues"/>
</dbReference>
<dbReference type="ExpressionAtlas" id="P48665">
    <property type="expression patterns" value="baseline"/>
</dbReference>
<dbReference type="GO" id="GO:0016020">
    <property type="term" value="C:membrane"/>
    <property type="evidence" value="ECO:0000318"/>
    <property type="project" value="GO_Central"/>
</dbReference>
<dbReference type="GO" id="GO:0005743">
    <property type="term" value="C:mitochondrial inner membrane"/>
    <property type="evidence" value="ECO:0007669"/>
    <property type="project" value="UniProtKB-SubCell"/>
</dbReference>
<dbReference type="GO" id="GO:0045275">
    <property type="term" value="C:respiratory chain complex III"/>
    <property type="evidence" value="ECO:0000318"/>
    <property type="project" value="GO_Central"/>
</dbReference>
<dbReference type="GO" id="GO:0046872">
    <property type="term" value="F:metal ion binding"/>
    <property type="evidence" value="ECO:0007669"/>
    <property type="project" value="UniProtKB-KW"/>
</dbReference>
<dbReference type="GO" id="GO:0008121">
    <property type="term" value="F:ubiquinol-cytochrome-c reductase activity"/>
    <property type="evidence" value="ECO:0007669"/>
    <property type="project" value="InterPro"/>
</dbReference>
<dbReference type="GO" id="GO:0006122">
    <property type="term" value="P:mitochondrial electron transport, ubiquinol to cytochrome c"/>
    <property type="evidence" value="ECO:0000318"/>
    <property type="project" value="GO_Central"/>
</dbReference>
<dbReference type="CDD" id="cd00290">
    <property type="entry name" value="cytochrome_b_C"/>
    <property type="match status" value="1"/>
</dbReference>
<dbReference type="CDD" id="cd00284">
    <property type="entry name" value="Cytochrome_b_N"/>
    <property type="match status" value="1"/>
</dbReference>
<dbReference type="FunFam" id="1.20.810.10:FF:000002">
    <property type="entry name" value="Cytochrome b"/>
    <property type="match status" value="1"/>
</dbReference>
<dbReference type="Gene3D" id="1.20.810.10">
    <property type="entry name" value="Cytochrome Bc1 Complex, Chain C"/>
    <property type="match status" value="1"/>
</dbReference>
<dbReference type="InterPro" id="IPR005798">
    <property type="entry name" value="Cyt_b/b6_C"/>
</dbReference>
<dbReference type="InterPro" id="IPR036150">
    <property type="entry name" value="Cyt_b/b6_C_sf"/>
</dbReference>
<dbReference type="InterPro" id="IPR005797">
    <property type="entry name" value="Cyt_b/b6_N"/>
</dbReference>
<dbReference type="InterPro" id="IPR027387">
    <property type="entry name" value="Cytb/b6-like_sf"/>
</dbReference>
<dbReference type="InterPro" id="IPR030689">
    <property type="entry name" value="Cytochrome_b"/>
</dbReference>
<dbReference type="InterPro" id="IPR048260">
    <property type="entry name" value="Cytochrome_b_C_euk/bac"/>
</dbReference>
<dbReference type="InterPro" id="IPR048259">
    <property type="entry name" value="Cytochrome_b_N_euk/bac"/>
</dbReference>
<dbReference type="InterPro" id="IPR016174">
    <property type="entry name" value="Di-haem_cyt_TM"/>
</dbReference>
<dbReference type="PANTHER" id="PTHR19271">
    <property type="entry name" value="CYTOCHROME B"/>
    <property type="match status" value="1"/>
</dbReference>
<dbReference type="PANTHER" id="PTHR19271:SF16">
    <property type="entry name" value="CYTOCHROME B"/>
    <property type="match status" value="1"/>
</dbReference>
<dbReference type="Pfam" id="PF00032">
    <property type="entry name" value="Cytochrom_B_C"/>
    <property type="match status" value="1"/>
</dbReference>
<dbReference type="Pfam" id="PF00033">
    <property type="entry name" value="Cytochrome_B"/>
    <property type="match status" value="1"/>
</dbReference>
<dbReference type="PIRSF" id="PIRSF038885">
    <property type="entry name" value="COB"/>
    <property type="match status" value="1"/>
</dbReference>
<dbReference type="SUPFAM" id="SSF81648">
    <property type="entry name" value="a domain/subunit of cytochrome bc1 complex (Ubiquinol-cytochrome c reductase)"/>
    <property type="match status" value="1"/>
</dbReference>
<dbReference type="SUPFAM" id="SSF81342">
    <property type="entry name" value="Transmembrane di-heme cytochromes"/>
    <property type="match status" value="1"/>
</dbReference>
<dbReference type="PROSITE" id="PS51003">
    <property type="entry name" value="CYTB_CTER"/>
    <property type="match status" value="1"/>
</dbReference>
<dbReference type="PROSITE" id="PS51002">
    <property type="entry name" value="CYTB_NTER"/>
    <property type="match status" value="1"/>
</dbReference>
<sequence>MTNIRKSHPLIKIINHSFIDLPAPSNISSWWNFGSLLGICLILQILTGLFLAMHYTSDTTTAFSSVTHICRDVNYGWIIRYLHANGASMFFICLFIHVGRGLYYGSYTFLETWNIGIILLFTVMATAFMGYVLPWGQMSFWGATVITNLLSAIPYIGTTLVEWIWGGFSVDKATLTRFFAFHFILPFIITALVVVHLLFLHETGSNNPSGIPSDMDKIPFHPYYTIKDILGLLLLILLLLTLVLFSPDLLGDPDNYTPANPLSTPPHIKPEWYFLFAYAILRSIPNKLGGVLALILSILILALIPTLHMSKQRSMMFRPLSQCVFWLLVADLLTLTWIGGQPVEHPYVIIGQLASILYFSLILIFMPLASTIENNLLKW</sequence>
<geneLocation type="mitochondrion"/>
<feature type="chain" id="PRO_0000061044" description="Cytochrome b">
    <location>
        <begin position="1"/>
        <end position="379"/>
    </location>
</feature>
<feature type="transmembrane region" description="Helical" evidence="2">
    <location>
        <begin position="33"/>
        <end position="53"/>
    </location>
</feature>
<feature type="transmembrane region" description="Helical" evidence="2">
    <location>
        <begin position="77"/>
        <end position="98"/>
    </location>
</feature>
<feature type="transmembrane region" description="Helical" evidence="2">
    <location>
        <begin position="113"/>
        <end position="133"/>
    </location>
</feature>
<feature type="transmembrane region" description="Helical" evidence="2">
    <location>
        <begin position="178"/>
        <end position="198"/>
    </location>
</feature>
<feature type="transmembrane region" description="Helical" evidence="2">
    <location>
        <begin position="226"/>
        <end position="246"/>
    </location>
</feature>
<feature type="transmembrane region" description="Helical" evidence="2">
    <location>
        <begin position="288"/>
        <end position="308"/>
    </location>
</feature>
<feature type="transmembrane region" description="Helical" evidence="2">
    <location>
        <begin position="320"/>
        <end position="340"/>
    </location>
</feature>
<feature type="transmembrane region" description="Helical" evidence="2">
    <location>
        <begin position="347"/>
        <end position="367"/>
    </location>
</feature>
<feature type="binding site" description="axial binding residue" evidence="2">
    <location>
        <position position="83"/>
    </location>
    <ligand>
        <name>heme b</name>
        <dbReference type="ChEBI" id="CHEBI:60344"/>
        <label>b562</label>
    </ligand>
    <ligandPart>
        <name>Fe</name>
        <dbReference type="ChEBI" id="CHEBI:18248"/>
    </ligandPart>
</feature>
<feature type="binding site" description="axial binding residue" evidence="2">
    <location>
        <position position="97"/>
    </location>
    <ligand>
        <name>heme b</name>
        <dbReference type="ChEBI" id="CHEBI:60344"/>
        <label>b566</label>
    </ligand>
    <ligandPart>
        <name>Fe</name>
        <dbReference type="ChEBI" id="CHEBI:18248"/>
    </ligandPart>
</feature>
<feature type="binding site" description="axial binding residue" evidence="2">
    <location>
        <position position="182"/>
    </location>
    <ligand>
        <name>heme b</name>
        <dbReference type="ChEBI" id="CHEBI:60344"/>
        <label>b562</label>
    </ligand>
    <ligandPart>
        <name>Fe</name>
        <dbReference type="ChEBI" id="CHEBI:18248"/>
    </ligandPart>
</feature>
<feature type="binding site" description="axial binding residue" evidence="2">
    <location>
        <position position="196"/>
    </location>
    <ligand>
        <name>heme b</name>
        <dbReference type="ChEBI" id="CHEBI:60344"/>
        <label>b566</label>
    </ligand>
    <ligandPart>
        <name>Fe</name>
        <dbReference type="ChEBI" id="CHEBI:18248"/>
    </ligandPart>
</feature>
<feature type="binding site" evidence="2">
    <location>
        <position position="201"/>
    </location>
    <ligand>
        <name>a ubiquinone</name>
        <dbReference type="ChEBI" id="CHEBI:16389"/>
    </ligand>
</feature>
<comment type="function">
    <text evidence="2">Component of the ubiquinol-cytochrome c reductase complex (complex III or cytochrome b-c1 complex) that is part of the mitochondrial respiratory chain. The b-c1 complex mediates electron transfer from ubiquinol to cytochrome c. Contributes to the generation of a proton gradient across the mitochondrial membrane that is then used for ATP synthesis.</text>
</comment>
<comment type="cofactor">
    <cofactor evidence="2">
        <name>heme b</name>
        <dbReference type="ChEBI" id="CHEBI:60344"/>
    </cofactor>
    <text evidence="2">Binds 2 heme b groups non-covalently.</text>
</comment>
<comment type="subunit">
    <text evidence="2">The cytochrome bc1 complex contains 11 subunits: 3 respiratory subunits (MT-CYB, CYC1 and UQCRFS1), 2 core proteins (UQCRC1 and UQCRC2) and 6 low-molecular weight proteins (UQCRH/QCR6, UQCRB/QCR7, UQCRQ/QCR8, UQCR10/QCR9, UQCR11/QCR10 and a cleavage product of UQCRFS1). This cytochrome bc1 complex then forms a dimer.</text>
</comment>
<comment type="subcellular location">
    <subcellularLocation>
        <location evidence="2">Mitochondrion inner membrane</location>
        <topology evidence="2">Multi-pass membrane protein</topology>
    </subcellularLocation>
</comment>
<comment type="miscellaneous">
    <text evidence="1">Heme 1 (or BL or b562) is low-potential and absorbs at about 562 nm, and heme 2 (or BH or b566) is high-potential and absorbs at about 566 nm.</text>
</comment>
<comment type="similarity">
    <text evidence="3 4">Belongs to the cytochrome b family.</text>
</comment>
<comment type="caution">
    <text evidence="2">The full-length protein contains only eight transmembrane helices, not nine as predicted by bioinformatics tools.</text>
</comment>
<evidence type="ECO:0000250" key="1"/>
<evidence type="ECO:0000250" key="2">
    <source>
        <dbReference type="UniProtKB" id="P00157"/>
    </source>
</evidence>
<evidence type="ECO:0000255" key="3">
    <source>
        <dbReference type="PROSITE-ProRule" id="PRU00967"/>
    </source>
</evidence>
<evidence type="ECO:0000255" key="4">
    <source>
        <dbReference type="PROSITE-ProRule" id="PRU00968"/>
    </source>
</evidence>
<evidence type="ECO:0000312" key="5">
    <source>
        <dbReference type="Proteomes" id="UP000002281"/>
    </source>
</evidence>